<sequence>MLLIYGIFAFVVLVFFYLLGKETGGEMEEEYRLREYLEVLKNRNVVILSVIAFIGVGIFTAYLTWVEPVLEEHGLTVETAGLTATAFLLGGIFGSIIIPALSDRAGKRKPFLYLCFIISAVLFYIHAIAFGMAMVAAVLFVLGFFFISALPLALDLSATSVGEQFAGTANSSLWLFSQVGSVVLIVLFESMASWNSTLLLSAGLLAVSFLLALQLKE</sequence>
<reference key="1">
    <citation type="journal article" date="1997" name="Nature">
        <title>The complete genome sequence of the hyperthermophilic, sulphate-reducing archaeon Archaeoglobus fulgidus.</title>
        <authorList>
            <person name="Klenk H.-P."/>
            <person name="Clayton R.A."/>
            <person name="Tomb J.-F."/>
            <person name="White O."/>
            <person name="Nelson K.E."/>
            <person name="Ketchum K.A."/>
            <person name="Dodson R.J."/>
            <person name="Gwinn M.L."/>
            <person name="Hickey E.K."/>
            <person name="Peterson J.D."/>
            <person name="Richardson D.L."/>
            <person name="Kerlavage A.R."/>
            <person name="Graham D.E."/>
            <person name="Kyrpides N.C."/>
            <person name="Fleischmann R.D."/>
            <person name="Quackenbush J."/>
            <person name="Lee N.H."/>
            <person name="Sutton G.G."/>
            <person name="Gill S.R."/>
            <person name="Kirkness E.F."/>
            <person name="Dougherty B.A."/>
            <person name="McKenney K."/>
            <person name="Adams M.D."/>
            <person name="Loftus B.J."/>
            <person name="Peterson S.N."/>
            <person name="Reich C.I."/>
            <person name="McNeil L.K."/>
            <person name="Badger J.H."/>
            <person name="Glodek A."/>
            <person name="Zhou L."/>
            <person name="Overbeek R."/>
            <person name="Gocayne J.D."/>
            <person name="Weidman J.F."/>
            <person name="McDonald L.A."/>
            <person name="Utterback T.R."/>
            <person name="Cotton M.D."/>
            <person name="Spriggs T."/>
            <person name="Artiach P."/>
            <person name="Kaine B.P."/>
            <person name="Sykes S.M."/>
            <person name="Sadow P.W."/>
            <person name="D'Andrea K.P."/>
            <person name="Bowman C."/>
            <person name="Fujii C."/>
            <person name="Garland S.A."/>
            <person name="Mason T.M."/>
            <person name="Olsen G.J."/>
            <person name="Fraser C.M."/>
            <person name="Smith H.O."/>
            <person name="Woese C.R."/>
            <person name="Venter J.C."/>
        </authorList>
    </citation>
    <scope>NUCLEOTIDE SEQUENCE [LARGE SCALE GENOMIC DNA]</scope>
    <source>
        <strain>ATCC 49558 / DSM 4304 / JCM 9628 / NBRC 100126 / VC-16</strain>
    </source>
</reference>
<proteinExistence type="predicted"/>
<dbReference type="EMBL" id="AE000782">
    <property type="protein sequence ID" value="AAB89144.1"/>
    <property type="molecule type" value="Genomic_DNA"/>
</dbReference>
<dbReference type="PIR" id="F69512">
    <property type="entry name" value="F69512"/>
</dbReference>
<dbReference type="SMR" id="O28178"/>
<dbReference type="STRING" id="224325.AF_2102"/>
<dbReference type="PaxDb" id="224325-AF_2102"/>
<dbReference type="EnsemblBacteria" id="AAB89144">
    <property type="protein sequence ID" value="AAB89144"/>
    <property type="gene ID" value="AF_2102"/>
</dbReference>
<dbReference type="KEGG" id="afu:AF_2102"/>
<dbReference type="eggNOG" id="arCOG00130">
    <property type="taxonomic scope" value="Archaea"/>
</dbReference>
<dbReference type="HOGENOM" id="CLU_1269853_0_0_2"/>
<dbReference type="Proteomes" id="UP000002199">
    <property type="component" value="Chromosome"/>
</dbReference>
<dbReference type="GO" id="GO:0005886">
    <property type="term" value="C:plasma membrane"/>
    <property type="evidence" value="ECO:0007669"/>
    <property type="project" value="UniProtKB-SubCell"/>
</dbReference>
<dbReference type="GO" id="GO:0022857">
    <property type="term" value="F:transmembrane transporter activity"/>
    <property type="evidence" value="ECO:0007669"/>
    <property type="project" value="InterPro"/>
</dbReference>
<dbReference type="Gene3D" id="1.20.1250.20">
    <property type="entry name" value="MFS general substrate transporter like domains"/>
    <property type="match status" value="1"/>
</dbReference>
<dbReference type="InterPro" id="IPR011701">
    <property type="entry name" value="MFS"/>
</dbReference>
<dbReference type="InterPro" id="IPR020846">
    <property type="entry name" value="MFS_dom"/>
</dbReference>
<dbReference type="InterPro" id="IPR050189">
    <property type="entry name" value="MFS_Efflux_Transporters"/>
</dbReference>
<dbReference type="InterPro" id="IPR036259">
    <property type="entry name" value="MFS_trans_sf"/>
</dbReference>
<dbReference type="PANTHER" id="PTHR43124:SF3">
    <property type="entry name" value="CHLORAMPHENICOL EFFLUX PUMP RV0191"/>
    <property type="match status" value="1"/>
</dbReference>
<dbReference type="PANTHER" id="PTHR43124">
    <property type="entry name" value="PURINE EFFLUX PUMP PBUE"/>
    <property type="match status" value="1"/>
</dbReference>
<dbReference type="Pfam" id="PF07690">
    <property type="entry name" value="MFS_1"/>
    <property type="match status" value="1"/>
</dbReference>
<dbReference type="SUPFAM" id="SSF103473">
    <property type="entry name" value="MFS general substrate transporter"/>
    <property type="match status" value="1"/>
</dbReference>
<dbReference type="PROSITE" id="PS50850">
    <property type="entry name" value="MFS"/>
    <property type="match status" value="1"/>
</dbReference>
<name>Y2102_ARCFU</name>
<keyword id="KW-1003">Cell membrane</keyword>
<keyword id="KW-0472">Membrane</keyword>
<keyword id="KW-1185">Reference proteome</keyword>
<keyword id="KW-0812">Transmembrane</keyword>
<keyword id="KW-1133">Transmembrane helix</keyword>
<protein>
    <recommendedName>
        <fullName>Uncharacterized protein AF_2102</fullName>
    </recommendedName>
</protein>
<feature type="chain" id="PRO_0000128091" description="Uncharacterized protein AF_2102">
    <location>
        <begin position="1"/>
        <end position="217"/>
    </location>
</feature>
<feature type="transmembrane region" description="Helical" evidence="1">
    <location>
        <begin position="4"/>
        <end position="23"/>
    </location>
</feature>
<feature type="transmembrane region" description="Helical" evidence="1">
    <location>
        <begin position="44"/>
        <end position="66"/>
    </location>
</feature>
<feature type="transmembrane region" description="Helical" evidence="1">
    <location>
        <begin position="76"/>
        <end position="98"/>
    </location>
</feature>
<feature type="transmembrane region" description="Helical" evidence="1">
    <location>
        <begin position="111"/>
        <end position="128"/>
    </location>
</feature>
<feature type="transmembrane region" description="Helical" evidence="1">
    <location>
        <begin position="132"/>
        <end position="154"/>
    </location>
</feature>
<feature type="transmembrane region" description="Helical" evidence="1">
    <location>
        <begin position="166"/>
        <end position="188"/>
    </location>
</feature>
<feature type="transmembrane region" description="Helical" evidence="1">
    <location>
        <begin position="198"/>
        <end position="215"/>
    </location>
</feature>
<evidence type="ECO:0000255" key="1"/>
<evidence type="ECO:0000305" key="2"/>
<accession>O28178</accession>
<organism>
    <name type="scientific">Archaeoglobus fulgidus (strain ATCC 49558 / DSM 4304 / JCM 9628 / NBRC 100126 / VC-16)</name>
    <dbReference type="NCBI Taxonomy" id="224325"/>
    <lineage>
        <taxon>Archaea</taxon>
        <taxon>Methanobacteriati</taxon>
        <taxon>Methanobacteriota</taxon>
        <taxon>Archaeoglobi</taxon>
        <taxon>Archaeoglobales</taxon>
        <taxon>Archaeoglobaceae</taxon>
        <taxon>Archaeoglobus</taxon>
    </lineage>
</organism>
<comment type="subcellular location">
    <subcellularLocation>
        <location evidence="2">Cell membrane</location>
        <topology evidence="2">Multi-pass membrane protein</topology>
    </subcellularLocation>
</comment>
<gene>
    <name type="ordered locus">AF_2102</name>
</gene>